<feature type="initiator methionine" description="Removed" evidence="5">
    <location>
        <position position="1"/>
    </location>
</feature>
<feature type="chain" id="PRO_0000139722" description="Large ribosomal subunit protein eL37A">
    <location>
        <begin position="2"/>
        <end position="88"/>
    </location>
</feature>
<feature type="zinc finger region" description="C4-type" evidence="1">
    <location>
        <begin position="19"/>
        <end position="37"/>
    </location>
</feature>
<feature type="binding site" evidence="4">
    <location>
        <position position="19"/>
    </location>
    <ligand>
        <name>Zn(2+)</name>
        <dbReference type="ChEBI" id="CHEBI:29105"/>
    </ligand>
</feature>
<feature type="binding site" evidence="4">
    <location>
        <position position="22"/>
    </location>
    <ligand>
        <name>Zn(2+)</name>
        <dbReference type="ChEBI" id="CHEBI:29105"/>
    </ligand>
</feature>
<feature type="binding site" evidence="4">
    <location>
        <position position="34"/>
    </location>
    <ligand>
        <name>Zn(2+)</name>
        <dbReference type="ChEBI" id="CHEBI:29105"/>
    </ligand>
</feature>
<feature type="binding site" evidence="4">
    <location>
        <position position="37"/>
    </location>
    <ligand>
        <name>Zn(2+)</name>
        <dbReference type="ChEBI" id="CHEBI:29105"/>
    </ligand>
</feature>
<feature type="sequence conflict" description="In Ref. 3; AA sequence." evidence="8" ref="3">
    <original>R</original>
    <variation>RR</variation>
    <location>
        <position position="73"/>
    </location>
</feature>
<feature type="strand" evidence="12">
    <location>
        <begin position="16"/>
        <end position="18"/>
    </location>
</feature>
<feature type="turn" evidence="12">
    <location>
        <begin position="20"/>
        <end position="22"/>
    </location>
</feature>
<feature type="strand" evidence="12">
    <location>
        <begin position="24"/>
        <end position="28"/>
    </location>
</feature>
<feature type="turn" evidence="12">
    <location>
        <begin position="29"/>
        <end position="32"/>
    </location>
</feature>
<feature type="turn" evidence="12">
    <location>
        <begin position="35"/>
        <end position="37"/>
    </location>
</feature>
<feature type="strand" evidence="11">
    <location>
        <begin position="41"/>
        <end position="43"/>
    </location>
</feature>
<feature type="helix" evidence="11">
    <location>
        <begin position="51"/>
        <end position="56"/>
    </location>
</feature>
<feature type="helix" evidence="11">
    <location>
        <begin position="67"/>
        <end position="69"/>
    </location>
</feature>
<feature type="helix" evidence="11">
    <location>
        <begin position="70"/>
        <end position="76"/>
    </location>
</feature>
<name>RL37A_YEAST</name>
<evidence type="ECO:0000255" key="1"/>
<evidence type="ECO:0000269" key="2">
    <source>
    </source>
</evidence>
<evidence type="ECO:0000269" key="3">
    <source>
    </source>
</evidence>
<evidence type="ECO:0000269" key="4">
    <source>
    </source>
</evidence>
<evidence type="ECO:0000269" key="5">
    <source ref="3"/>
</evidence>
<evidence type="ECO:0000303" key="6">
    <source>
    </source>
</evidence>
<evidence type="ECO:0000303" key="7">
    <source>
    </source>
</evidence>
<evidence type="ECO:0000305" key="8"/>
<evidence type="ECO:0000305" key="9">
    <source>
    </source>
</evidence>
<evidence type="ECO:0000305" key="10">
    <source>
    </source>
</evidence>
<evidence type="ECO:0007829" key="11">
    <source>
        <dbReference type="PDB" id="6EM3"/>
    </source>
</evidence>
<evidence type="ECO:0007829" key="12">
    <source>
        <dbReference type="PDB" id="7NAD"/>
    </source>
</evidence>
<gene>
    <name evidence="7" type="primary">RPL37A</name>
    <name type="synonym">RPL35A</name>
    <name type="ordered locus">YLR185W</name>
    <name type="ORF">L9470.6</name>
</gene>
<sequence>MGKGTPSFGKRHNKSHTLCNRCGRRSFHVQKKTCSSCGYPAAKTRSYNWGAKAKRRHTTGTGRMRYLKHVSRRFKNGFQTGSASKASA</sequence>
<keyword id="KW-0002">3D-structure</keyword>
<keyword id="KW-0963">Cytoplasm</keyword>
<keyword id="KW-0903">Direct protein sequencing</keyword>
<keyword id="KW-0479">Metal-binding</keyword>
<keyword id="KW-1185">Reference proteome</keyword>
<keyword id="KW-0687">Ribonucleoprotein</keyword>
<keyword id="KW-0689">Ribosomal protein</keyword>
<keyword id="KW-0694">RNA-binding</keyword>
<keyword id="KW-0699">rRNA-binding</keyword>
<keyword id="KW-0862">Zinc</keyword>
<keyword id="KW-0863">Zinc-finger</keyword>
<comment type="function">
    <text evidence="9">Component of the ribosome, a large ribonucleoprotein complex responsible for the synthesis of proteins in the cell. The small ribosomal subunit (SSU) binds messenger RNAs (mRNAs) and translates the encoded message by selecting cognate aminoacyl-transfer RNA (tRNA) molecules. The large subunit (LSU) contains the ribosomal catalytic site termed the peptidyl transferase center (PTC), which catalyzes the formation of peptide bonds, thereby polymerizing the amino acids delivered by tRNAs into a polypeptide chain. The nascent polypeptides leave the ribosome through a tunnel in the LSU and interact with protein factors that function in enzymatic processing, targeting, and the membrane insertion of nascent chains at the exit of the ribosomal tunnel.</text>
</comment>
<comment type="cofactor">
    <cofactor evidence="4">
        <name>Zn(2+)</name>
        <dbReference type="ChEBI" id="CHEBI:29105"/>
    </cofactor>
    <text evidence="4">Binds 1 zinc ion per subunit.</text>
</comment>
<comment type="subunit">
    <text evidence="4 10">Component of the large ribosomal subunit (LSU). Mature yeast ribosomes consist of a small (40S) and a large (60S) subunit. The 40S small subunit contains 1 molecule of ribosomal RNA (18S rRNA) and 33 different proteins (encoded by 57 genes). The large 60S subunit contains 3 rRNA molecules (25S, 5.8S and 5S rRNA) and 46 different proteins (encoded by 81 genes) (PubMed:22096102, PubMed:9559554).</text>
</comment>
<comment type="subcellular location">
    <subcellularLocation>
        <location evidence="2 4">Cytoplasm</location>
    </subcellularLocation>
</comment>
<comment type="miscellaneous">
    <text evidence="3">Present with 21800 molecules/cell in log phase SD medium.</text>
</comment>
<comment type="miscellaneous">
    <text evidence="8">There are 2 genes for eL37 in yeast.</text>
</comment>
<comment type="similarity">
    <text evidence="8">Belongs to the eukaryotic ribosomal protein eL37 family.</text>
</comment>
<organism>
    <name type="scientific">Saccharomyces cerevisiae (strain ATCC 204508 / S288c)</name>
    <name type="common">Baker's yeast</name>
    <dbReference type="NCBI Taxonomy" id="559292"/>
    <lineage>
        <taxon>Eukaryota</taxon>
        <taxon>Fungi</taxon>
        <taxon>Dikarya</taxon>
        <taxon>Ascomycota</taxon>
        <taxon>Saccharomycotina</taxon>
        <taxon>Saccharomycetes</taxon>
        <taxon>Saccharomycetales</taxon>
        <taxon>Saccharomycetaceae</taxon>
        <taxon>Saccharomyces</taxon>
    </lineage>
</organism>
<protein>
    <recommendedName>
        <fullName evidence="6">Large ribosomal subunit protein eL37A</fullName>
    </recommendedName>
    <alternativeName>
        <fullName evidence="7">60S ribosomal protein L37-A</fullName>
    </alternativeName>
    <alternativeName>
        <fullName>L43</fullName>
    </alternativeName>
    <alternativeName>
        <fullName>YL35</fullName>
    </alternativeName>
    <alternativeName>
        <fullName>YP55</fullName>
    </alternativeName>
</protein>
<reference key="1">
    <citation type="journal article" date="1997" name="Nature">
        <title>The nucleotide sequence of Saccharomyces cerevisiae chromosome XII.</title>
        <authorList>
            <person name="Johnston M."/>
            <person name="Hillier L.W."/>
            <person name="Riles L."/>
            <person name="Albermann K."/>
            <person name="Andre B."/>
            <person name="Ansorge W."/>
            <person name="Benes V."/>
            <person name="Brueckner M."/>
            <person name="Delius H."/>
            <person name="Dubois E."/>
            <person name="Duesterhoeft A."/>
            <person name="Entian K.-D."/>
            <person name="Floeth M."/>
            <person name="Goffeau A."/>
            <person name="Hebling U."/>
            <person name="Heumann K."/>
            <person name="Heuss-Neitzel D."/>
            <person name="Hilbert H."/>
            <person name="Hilger F."/>
            <person name="Kleine K."/>
            <person name="Koetter P."/>
            <person name="Louis E.J."/>
            <person name="Messenguy F."/>
            <person name="Mewes H.-W."/>
            <person name="Miosga T."/>
            <person name="Moestl D."/>
            <person name="Mueller-Auer S."/>
            <person name="Nentwich U."/>
            <person name="Obermaier B."/>
            <person name="Piravandi E."/>
            <person name="Pohl T.M."/>
            <person name="Portetelle D."/>
            <person name="Purnelle B."/>
            <person name="Rechmann S."/>
            <person name="Rieger M."/>
            <person name="Rinke M."/>
            <person name="Rose M."/>
            <person name="Scharfe M."/>
            <person name="Scherens B."/>
            <person name="Scholler P."/>
            <person name="Schwager C."/>
            <person name="Schwarz S."/>
            <person name="Underwood A.P."/>
            <person name="Urrestarazu L.A."/>
            <person name="Vandenbol M."/>
            <person name="Verhasselt P."/>
            <person name="Vierendeels F."/>
            <person name="Voet M."/>
            <person name="Volckaert G."/>
            <person name="Voss H."/>
            <person name="Wambutt R."/>
            <person name="Wedler E."/>
            <person name="Wedler H."/>
            <person name="Zimmermann F.K."/>
            <person name="Zollner A."/>
            <person name="Hani J."/>
            <person name="Hoheisel J.D."/>
        </authorList>
    </citation>
    <scope>NUCLEOTIDE SEQUENCE [LARGE SCALE GENOMIC DNA]</scope>
    <source>
        <strain>ATCC 204508 / S288c</strain>
    </source>
</reference>
<reference key="2">
    <citation type="journal article" date="2014" name="G3 (Bethesda)">
        <title>The reference genome sequence of Saccharomyces cerevisiae: Then and now.</title>
        <authorList>
            <person name="Engel S.R."/>
            <person name="Dietrich F.S."/>
            <person name="Fisk D.G."/>
            <person name="Binkley G."/>
            <person name="Balakrishnan R."/>
            <person name="Costanzo M.C."/>
            <person name="Dwight S.S."/>
            <person name="Hitz B.C."/>
            <person name="Karra K."/>
            <person name="Nash R.S."/>
            <person name="Weng S."/>
            <person name="Wong E.D."/>
            <person name="Lloyd P."/>
            <person name="Skrzypek M.S."/>
            <person name="Miyasato S.R."/>
            <person name="Simison M."/>
            <person name="Cherry J.M."/>
        </authorList>
    </citation>
    <scope>GENOME REANNOTATION</scope>
    <source>
        <strain>ATCC 204508 / S288c</strain>
    </source>
</reference>
<reference key="3">
    <citation type="book" date="1980" name="Genetics and evolution of RNA polymerase, tRNA and ribosomes">
        <title>Studies on the primary structures of yeast ribosomal proteins.</title>
        <editorList>
            <person name="Osawa S."/>
            <person name="Ozeki H."/>
            <person name="Uchida H."/>
            <person name="Yura T."/>
        </editorList>
        <authorList>
            <person name="Itoh T."/>
            <person name="Higo K."/>
            <person name="Otaka E."/>
            <person name="Osawa S."/>
        </authorList>
    </citation>
    <scope>PROTEIN SEQUENCE OF 2-88</scope>
</reference>
<reference key="4">
    <citation type="journal article" date="1998" name="Yeast">
        <title>The list of cytoplasmic ribosomal proteins of Saccharomyces cerevisiae.</title>
        <authorList>
            <person name="Planta R.J."/>
            <person name="Mager W.H."/>
        </authorList>
    </citation>
    <scope>NOMENCLATURE</scope>
    <scope>SUBUNIT</scope>
</reference>
<reference key="5">
    <citation type="journal article" date="2003" name="Nature">
        <title>Global analysis of protein localization in budding yeast.</title>
        <authorList>
            <person name="Huh W.-K."/>
            <person name="Falvo J.V."/>
            <person name="Gerke L.C."/>
            <person name="Carroll A.S."/>
            <person name="Howson R.W."/>
            <person name="Weissman J.S."/>
            <person name="O'Shea E.K."/>
        </authorList>
    </citation>
    <scope>SUBCELLULAR LOCATION [LARGE SCALE ANALYSIS]</scope>
</reference>
<reference key="6">
    <citation type="journal article" date="2003" name="Nature">
        <title>Global analysis of protein expression in yeast.</title>
        <authorList>
            <person name="Ghaemmaghami S."/>
            <person name="Huh W.-K."/>
            <person name="Bower K."/>
            <person name="Howson R.W."/>
            <person name="Belle A."/>
            <person name="Dephoure N."/>
            <person name="O'Shea E.K."/>
            <person name="Weissman J.S."/>
        </authorList>
    </citation>
    <scope>LEVEL OF PROTEIN EXPRESSION [LARGE SCALE ANALYSIS]</scope>
</reference>
<reference key="7">
    <citation type="journal article" date="2014" name="Curr. Opin. Struct. Biol.">
        <title>A new system for naming ribosomal proteins.</title>
        <authorList>
            <person name="Ban N."/>
            <person name="Beckmann R."/>
            <person name="Cate J.H.D."/>
            <person name="Dinman J.D."/>
            <person name="Dragon F."/>
            <person name="Ellis S.R."/>
            <person name="Lafontaine D.L.J."/>
            <person name="Lindahl L."/>
            <person name="Liljas A."/>
            <person name="Lipton J.M."/>
            <person name="McAlear M.A."/>
            <person name="Moore P.B."/>
            <person name="Noller H.F."/>
            <person name="Ortega J."/>
            <person name="Panse V.G."/>
            <person name="Ramakrishnan V."/>
            <person name="Spahn C.M.T."/>
            <person name="Steitz T.A."/>
            <person name="Tchorzewski M."/>
            <person name="Tollervey D."/>
            <person name="Warren A.J."/>
            <person name="Williamson J.R."/>
            <person name="Wilson D."/>
            <person name="Yonath A."/>
            <person name="Yusupov M."/>
        </authorList>
    </citation>
    <scope>NOMENCLATURE</scope>
</reference>
<reference key="8">
    <citation type="journal article" date="2001" name="Cell">
        <title>Structure of the 80S ribosome from Saccharomyces cerevisiae -- tRNA-ribosome and subunit-subunit interactions.</title>
        <authorList>
            <person name="Spahn C.M.T."/>
            <person name="Beckmann R."/>
            <person name="Eswar N."/>
            <person name="Penczek P.A."/>
            <person name="Sali A."/>
            <person name="Blobel G."/>
            <person name="Frank J."/>
        </authorList>
    </citation>
    <scope>3D-STRUCTURE MODELING OF 2-53</scope>
    <scope>ELECTRON MICROSCOPY</scope>
</reference>
<reference key="9">
    <citation type="journal article" date="2004" name="EMBO J.">
        <title>Domain movements of elongation factor eEF2 and the eukaryotic 80S ribosome facilitate tRNA translocation.</title>
        <authorList>
            <person name="Spahn C.M.T."/>
            <person name="Gomez-Lorenzo M.G."/>
            <person name="Grassucci R.A."/>
            <person name="Joergensen R."/>
            <person name="Andersen G.R."/>
            <person name="Beckmann R."/>
            <person name="Penczek P.A."/>
            <person name="Ballesta J.P.G."/>
            <person name="Frank J."/>
        </authorList>
    </citation>
    <scope>3D-STRUCTURE MODELING</scope>
    <scope>ELECTRON MICROSCOPY</scope>
</reference>
<reference key="10">
    <citation type="journal article" date="2010" name="Science">
        <title>Crystal structure of the eukaryotic ribosome.</title>
        <authorList>
            <person name="Ben-Shem A."/>
            <person name="Jenner L."/>
            <person name="Yusupova G."/>
            <person name="Yusupov M."/>
        </authorList>
    </citation>
    <scope>X-RAY CRYSTALLOGRAPHY (4.0 ANGSTROMS) OF 80S RIBOSOME</scope>
</reference>
<reference key="11">
    <citation type="journal article" date="2011" name="Science">
        <title>The structure of the eukaryotic ribosome at 3.0 A resolution.</title>
        <authorList>
            <person name="Ben-Shem A."/>
            <person name="Garreau de Loubresse N."/>
            <person name="Melnikov S."/>
            <person name="Jenner L."/>
            <person name="Yusupova G."/>
            <person name="Yusupov M."/>
        </authorList>
    </citation>
    <scope>X-RAY CRYSTALLOGRAPHY (3.0 ANGSTROMS) OF 80S RIBOSOME</scope>
    <scope>SUBUNIT</scope>
    <scope>SUBCELLULAR LOCATION</scope>
    <scope>ZINC-BINDING</scope>
</reference>
<dbReference type="EMBL" id="U17246">
    <property type="protein sequence ID" value="AAB67458.1"/>
    <property type="molecule type" value="Genomic_DNA"/>
</dbReference>
<dbReference type="EMBL" id="BK006945">
    <property type="protein sequence ID" value="DAA09504.1"/>
    <property type="molecule type" value="Genomic_DNA"/>
</dbReference>
<dbReference type="PIR" id="S51430">
    <property type="entry name" value="S51430"/>
</dbReference>
<dbReference type="RefSeq" id="NP_013286.1">
    <property type="nucleotide sequence ID" value="NM_001182072.1"/>
</dbReference>
<dbReference type="PDB" id="3J6X">
    <property type="method" value="EM"/>
    <property type="resolution" value="6.10 A"/>
    <property type="chains" value="77=1-88"/>
</dbReference>
<dbReference type="PDB" id="3J6Y">
    <property type="method" value="EM"/>
    <property type="resolution" value="6.10 A"/>
    <property type="chains" value="77=1-88"/>
</dbReference>
<dbReference type="PDB" id="3J77">
    <property type="method" value="EM"/>
    <property type="resolution" value="6.20 A"/>
    <property type="chains" value="87=1-88"/>
</dbReference>
<dbReference type="PDB" id="3J78">
    <property type="method" value="EM"/>
    <property type="resolution" value="6.30 A"/>
    <property type="chains" value="87=1-88"/>
</dbReference>
<dbReference type="PDB" id="3JCT">
    <property type="method" value="EM"/>
    <property type="resolution" value="3.08 A"/>
    <property type="chains" value="j=1-88"/>
</dbReference>
<dbReference type="PDB" id="4U3M">
    <property type="method" value="X-ray"/>
    <property type="resolution" value="3.00 A"/>
    <property type="chains" value="O7/o7=2-88"/>
</dbReference>
<dbReference type="PDB" id="4U3N">
    <property type="method" value="X-ray"/>
    <property type="resolution" value="3.20 A"/>
    <property type="chains" value="O7/o7=2-88"/>
</dbReference>
<dbReference type="PDB" id="4U3U">
    <property type="method" value="X-ray"/>
    <property type="resolution" value="2.90 A"/>
    <property type="chains" value="O7/o7=2-88"/>
</dbReference>
<dbReference type="PDB" id="4U4N">
    <property type="method" value="X-ray"/>
    <property type="resolution" value="3.10 A"/>
    <property type="chains" value="O7/o7=2-88"/>
</dbReference>
<dbReference type="PDB" id="4U4O">
    <property type="method" value="X-ray"/>
    <property type="resolution" value="3.60 A"/>
    <property type="chains" value="O7/o7=2-88"/>
</dbReference>
<dbReference type="PDB" id="4U4Q">
    <property type="method" value="X-ray"/>
    <property type="resolution" value="3.00 A"/>
    <property type="chains" value="O7/o7=2-88"/>
</dbReference>
<dbReference type="PDB" id="4U4R">
    <property type="method" value="X-ray"/>
    <property type="resolution" value="2.80 A"/>
    <property type="chains" value="O7/o7=2-88"/>
</dbReference>
<dbReference type="PDB" id="4U4U">
    <property type="method" value="X-ray"/>
    <property type="resolution" value="3.00 A"/>
    <property type="chains" value="O7/o7=2-88"/>
</dbReference>
<dbReference type="PDB" id="4U4Y">
    <property type="method" value="X-ray"/>
    <property type="resolution" value="3.20 A"/>
    <property type="chains" value="O7/o7=2-88"/>
</dbReference>
<dbReference type="PDB" id="4U4Z">
    <property type="method" value="X-ray"/>
    <property type="resolution" value="3.10 A"/>
    <property type="chains" value="O7/o7=2-88"/>
</dbReference>
<dbReference type="PDB" id="4U50">
    <property type="method" value="X-ray"/>
    <property type="resolution" value="3.20 A"/>
    <property type="chains" value="O7/o7=2-88"/>
</dbReference>
<dbReference type="PDB" id="4U51">
    <property type="method" value="X-ray"/>
    <property type="resolution" value="3.20 A"/>
    <property type="chains" value="O7/o7=2-88"/>
</dbReference>
<dbReference type="PDB" id="4U52">
    <property type="method" value="X-ray"/>
    <property type="resolution" value="3.00 A"/>
    <property type="chains" value="O7/o7=2-88"/>
</dbReference>
<dbReference type="PDB" id="4U53">
    <property type="method" value="X-ray"/>
    <property type="resolution" value="3.30 A"/>
    <property type="chains" value="O7/o7=2-88"/>
</dbReference>
<dbReference type="PDB" id="4U55">
    <property type="method" value="X-ray"/>
    <property type="resolution" value="3.20 A"/>
    <property type="chains" value="O7/o7=2-88"/>
</dbReference>
<dbReference type="PDB" id="4U56">
    <property type="method" value="X-ray"/>
    <property type="resolution" value="3.45 A"/>
    <property type="chains" value="O7/o7=2-88"/>
</dbReference>
<dbReference type="PDB" id="4U6F">
    <property type="method" value="X-ray"/>
    <property type="resolution" value="3.10 A"/>
    <property type="chains" value="O7/o7=2-88"/>
</dbReference>
<dbReference type="PDB" id="4V4B">
    <property type="method" value="EM"/>
    <property type="resolution" value="11.70 A"/>
    <property type="chains" value="BY=2-88"/>
</dbReference>
<dbReference type="PDB" id="4V5Z">
    <property type="method" value="EM"/>
    <property type="resolution" value="8.70 A"/>
    <property type="chains" value="B2=1-85"/>
</dbReference>
<dbReference type="PDB" id="4V6I">
    <property type="method" value="EM"/>
    <property type="resolution" value="8.80 A"/>
    <property type="chains" value="Bl=1-88"/>
</dbReference>
<dbReference type="PDB" id="4V7F">
    <property type="method" value="EM"/>
    <property type="resolution" value="8.70 A"/>
    <property type="chains" value="h=1-88"/>
</dbReference>
<dbReference type="PDB" id="4V7R">
    <property type="method" value="X-ray"/>
    <property type="resolution" value="4.00 A"/>
    <property type="chains" value="Bd/Dd=1-88"/>
</dbReference>
<dbReference type="PDB" id="4V88">
    <property type="method" value="X-ray"/>
    <property type="resolution" value="3.00 A"/>
    <property type="chains" value="Bj/Dj=1-88"/>
</dbReference>
<dbReference type="PDB" id="4V8T">
    <property type="method" value="EM"/>
    <property type="resolution" value="8.10 A"/>
    <property type="chains" value="j=1-88"/>
</dbReference>
<dbReference type="PDB" id="4V8Y">
    <property type="method" value="EM"/>
    <property type="resolution" value="4.30 A"/>
    <property type="chains" value="Bj=2-88"/>
</dbReference>
<dbReference type="PDB" id="4V8Z">
    <property type="method" value="EM"/>
    <property type="resolution" value="6.60 A"/>
    <property type="chains" value="Bj=2-88"/>
</dbReference>
<dbReference type="PDB" id="4V91">
    <property type="method" value="EM"/>
    <property type="resolution" value="3.70 A"/>
    <property type="chains" value="j=1-88"/>
</dbReference>
<dbReference type="PDB" id="5APN">
    <property type="method" value="EM"/>
    <property type="resolution" value="3.91 A"/>
    <property type="chains" value="j=1-88"/>
</dbReference>
<dbReference type="PDB" id="5APO">
    <property type="method" value="EM"/>
    <property type="resolution" value="3.41 A"/>
    <property type="chains" value="j=1-88"/>
</dbReference>
<dbReference type="PDB" id="5DAT">
    <property type="method" value="X-ray"/>
    <property type="resolution" value="3.15 A"/>
    <property type="chains" value="O7/o7=2-88"/>
</dbReference>
<dbReference type="PDB" id="5DC3">
    <property type="method" value="X-ray"/>
    <property type="resolution" value="3.25 A"/>
    <property type="chains" value="O7/o7=2-88"/>
</dbReference>
<dbReference type="PDB" id="5DGE">
    <property type="method" value="X-ray"/>
    <property type="resolution" value="3.45 A"/>
    <property type="chains" value="O7/o7=2-88"/>
</dbReference>
<dbReference type="PDB" id="5DGF">
    <property type="method" value="X-ray"/>
    <property type="resolution" value="3.30 A"/>
    <property type="chains" value="O7/o7=2-88"/>
</dbReference>
<dbReference type="PDB" id="5DGV">
    <property type="method" value="X-ray"/>
    <property type="resolution" value="3.10 A"/>
    <property type="chains" value="O7/o7=2-88"/>
</dbReference>
<dbReference type="PDB" id="5FCI">
    <property type="method" value="X-ray"/>
    <property type="resolution" value="3.40 A"/>
    <property type="chains" value="O7/o7=2-88"/>
</dbReference>
<dbReference type="PDB" id="5FCJ">
    <property type="method" value="X-ray"/>
    <property type="resolution" value="3.10 A"/>
    <property type="chains" value="O7/o7=2-88"/>
</dbReference>
<dbReference type="PDB" id="5GAK">
    <property type="method" value="EM"/>
    <property type="resolution" value="3.88 A"/>
    <property type="chains" value="l=1-88"/>
</dbReference>
<dbReference type="PDB" id="5H4P">
    <property type="method" value="EM"/>
    <property type="resolution" value="3.07 A"/>
    <property type="chains" value="j=1-88"/>
</dbReference>
<dbReference type="PDB" id="5I4L">
    <property type="method" value="X-ray"/>
    <property type="resolution" value="3.10 A"/>
    <property type="chains" value="O7/o7=2-88"/>
</dbReference>
<dbReference type="PDB" id="5JCS">
    <property type="method" value="EM"/>
    <property type="resolution" value="9.50 A"/>
    <property type="chains" value="j=1-88"/>
</dbReference>
<dbReference type="PDB" id="5JUO">
    <property type="method" value="EM"/>
    <property type="resolution" value="4.00 A"/>
    <property type="chains" value="OA=1-88"/>
</dbReference>
<dbReference type="PDB" id="5JUP">
    <property type="method" value="EM"/>
    <property type="resolution" value="3.50 A"/>
    <property type="chains" value="OA=1-88"/>
</dbReference>
<dbReference type="PDB" id="5JUS">
    <property type="method" value="EM"/>
    <property type="resolution" value="4.20 A"/>
    <property type="chains" value="OA=1-88"/>
</dbReference>
<dbReference type="PDB" id="5JUT">
    <property type="method" value="EM"/>
    <property type="resolution" value="4.00 A"/>
    <property type="chains" value="OA=1-88"/>
</dbReference>
<dbReference type="PDB" id="5JUU">
    <property type="method" value="EM"/>
    <property type="resolution" value="4.00 A"/>
    <property type="chains" value="OA=1-88"/>
</dbReference>
<dbReference type="PDB" id="5LYB">
    <property type="method" value="X-ray"/>
    <property type="resolution" value="3.25 A"/>
    <property type="chains" value="O7/o7=2-88"/>
</dbReference>
<dbReference type="PDB" id="5M1J">
    <property type="method" value="EM"/>
    <property type="resolution" value="3.30 A"/>
    <property type="chains" value="j5=2-88"/>
</dbReference>
<dbReference type="PDB" id="5MC6">
    <property type="method" value="EM"/>
    <property type="resolution" value="3.80 A"/>
    <property type="chains" value="AF=1-88"/>
</dbReference>
<dbReference type="PDB" id="5MEI">
    <property type="method" value="X-ray"/>
    <property type="resolution" value="3.50 A"/>
    <property type="chains" value="AK/DL=2-88"/>
</dbReference>
<dbReference type="PDB" id="5NDG">
    <property type="method" value="X-ray"/>
    <property type="resolution" value="3.70 A"/>
    <property type="chains" value="O7/o7=2-85"/>
</dbReference>
<dbReference type="PDB" id="5NDV">
    <property type="method" value="X-ray"/>
    <property type="resolution" value="3.30 A"/>
    <property type="chains" value="O7/o7=2-88"/>
</dbReference>
<dbReference type="PDB" id="5NDW">
    <property type="method" value="X-ray"/>
    <property type="resolution" value="3.70 A"/>
    <property type="chains" value="O7/o7=2-88"/>
</dbReference>
<dbReference type="PDB" id="5OBM">
    <property type="method" value="X-ray"/>
    <property type="resolution" value="3.40 A"/>
    <property type="chains" value="O7/o7=2-88"/>
</dbReference>
<dbReference type="PDB" id="5ON6">
    <property type="method" value="X-ray"/>
    <property type="resolution" value="3.10 A"/>
    <property type="chains" value="AK/DL=2-88"/>
</dbReference>
<dbReference type="PDB" id="5T62">
    <property type="method" value="EM"/>
    <property type="resolution" value="3.30 A"/>
    <property type="chains" value="w=1-88"/>
</dbReference>
<dbReference type="PDB" id="5T6R">
    <property type="method" value="EM"/>
    <property type="resolution" value="4.50 A"/>
    <property type="chains" value="w=1-88"/>
</dbReference>
<dbReference type="PDB" id="5TBW">
    <property type="method" value="X-ray"/>
    <property type="resolution" value="3.00 A"/>
    <property type="chains" value="AK/DL=2-88"/>
</dbReference>
<dbReference type="PDB" id="5TGA">
    <property type="method" value="X-ray"/>
    <property type="resolution" value="3.30 A"/>
    <property type="chains" value="O7/o7=2-88"/>
</dbReference>
<dbReference type="PDB" id="5TGM">
    <property type="method" value="X-ray"/>
    <property type="resolution" value="3.50 A"/>
    <property type="chains" value="O7/o7=2-88"/>
</dbReference>
<dbReference type="PDB" id="5Z3G">
    <property type="method" value="EM"/>
    <property type="resolution" value="3.65 A"/>
    <property type="chains" value="n=1-88"/>
</dbReference>
<dbReference type="PDB" id="6C0F">
    <property type="method" value="EM"/>
    <property type="resolution" value="3.70 A"/>
    <property type="chains" value="j=1-88"/>
</dbReference>
<dbReference type="PDB" id="6CB1">
    <property type="method" value="EM"/>
    <property type="resolution" value="4.60 A"/>
    <property type="chains" value="j=1-88"/>
</dbReference>
<dbReference type="PDB" id="6ELZ">
    <property type="method" value="EM"/>
    <property type="resolution" value="3.30 A"/>
    <property type="chains" value="j=1-88"/>
</dbReference>
<dbReference type="PDB" id="6EM1">
    <property type="method" value="EM"/>
    <property type="resolution" value="3.60 A"/>
    <property type="chains" value="j=1-88"/>
</dbReference>
<dbReference type="PDB" id="6EM3">
    <property type="method" value="EM"/>
    <property type="resolution" value="3.20 A"/>
    <property type="chains" value="j=1-88"/>
</dbReference>
<dbReference type="PDB" id="6EM4">
    <property type="method" value="EM"/>
    <property type="resolution" value="4.10 A"/>
    <property type="chains" value="j=1-88"/>
</dbReference>
<dbReference type="PDB" id="6EM5">
    <property type="method" value="EM"/>
    <property type="resolution" value="4.30 A"/>
    <property type="chains" value="j=1-88"/>
</dbReference>
<dbReference type="PDB" id="6FT6">
    <property type="method" value="EM"/>
    <property type="resolution" value="3.90 A"/>
    <property type="chains" value="j=1-88"/>
</dbReference>
<dbReference type="PDB" id="6GQ1">
    <property type="method" value="EM"/>
    <property type="resolution" value="4.40 A"/>
    <property type="chains" value="j=2-88"/>
</dbReference>
<dbReference type="PDB" id="6GQB">
    <property type="method" value="EM"/>
    <property type="resolution" value="3.90 A"/>
    <property type="chains" value="j=2-88"/>
</dbReference>
<dbReference type="PDB" id="6GQV">
    <property type="method" value="EM"/>
    <property type="resolution" value="4.00 A"/>
    <property type="chains" value="j=2-88"/>
</dbReference>
<dbReference type="PDB" id="6HD7">
    <property type="method" value="EM"/>
    <property type="resolution" value="3.40 A"/>
    <property type="chains" value="l=1-88"/>
</dbReference>
<dbReference type="PDB" id="6HHQ">
    <property type="method" value="X-ray"/>
    <property type="resolution" value="3.10 A"/>
    <property type="chains" value="AK/DL=1-88"/>
</dbReference>
<dbReference type="PDB" id="6I7O">
    <property type="method" value="EM"/>
    <property type="resolution" value="5.30 A"/>
    <property type="chains" value="AF/XF=2-83"/>
</dbReference>
<dbReference type="PDB" id="6M62">
    <property type="method" value="EM"/>
    <property type="resolution" value="3.20 A"/>
    <property type="chains" value="j=1-88"/>
</dbReference>
<dbReference type="PDB" id="6N8J">
    <property type="method" value="EM"/>
    <property type="resolution" value="3.50 A"/>
    <property type="chains" value="j=1-88"/>
</dbReference>
<dbReference type="PDB" id="6N8K">
    <property type="method" value="EM"/>
    <property type="resolution" value="3.60 A"/>
    <property type="chains" value="j=1-88"/>
</dbReference>
<dbReference type="PDB" id="6N8L">
    <property type="method" value="EM"/>
    <property type="resolution" value="3.60 A"/>
    <property type="chains" value="j=1-88"/>
</dbReference>
<dbReference type="PDB" id="6N8M">
    <property type="method" value="EM"/>
    <property type="resolution" value="3.50 A"/>
    <property type="chains" value="w=1-88"/>
</dbReference>
<dbReference type="PDB" id="6N8N">
    <property type="method" value="EM"/>
    <property type="resolution" value="3.80 A"/>
    <property type="chains" value="w=1-88"/>
</dbReference>
<dbReference type="PDB" id="6N8O">
    <property type="method" value="EM"/>
    <property type="resolution" value="3.50 A"/>
    <property type="chains" value="w=1-88"/>
</dbReference>
<dbReference type="PDB" id="6OIG">
    <property type="method" value="EM"/>
    <property type="resolution" value="3.80 A"/>
    <property type="chains" value="j=2-88"/>
</dbReference>
<dbReference type="PDB" id="6Q8Y">
    <property type="method" value="EM"/>
    <property type="resolution" value="3.10 A"/>
    <property type="chains" value="AF=2-88"/>
</dbReference>
<dbReference type="PDB" id="6QIK">
    <property type="method" value="EM"/>
    <property type="resolution" value="3.10 A"/>
    <property type="chains" value="i=1-88"/>
</dbReference>
<dbReference type="PDB" id="6QT0">
    <property type="method" value="EM"/>
    <property type="resolution" value="3.40 A"/>
    <property type="chains" value="i=1-88"/>
</dbReference>
<dbReference type="PDB" id="6QTZ">
    <property type="method" value="EM"/>
    <property type="resolution" value="3.50 A"/>
    <property type="chains" value="i=1-88"/>
</dbReference>
<dbReference type="PDB" id="6R84">
    <property type="method" value="EM"/>
    <property type="resolution" value="3.60 A"/>
    <property type="chains" value="l=2-88"/>
</dbReference>
<dbReference type="PDB" id="6R86">
    <property type="method" value="EM"/>
    <property type="resolution" value="3.40 A"/>
    <property type="chains" value="l=2-88"/>
</dbReference>
<dbReference type="PDB" id="6R87">
    <property type="method" value="EM"/>
    <property type="resolution" value="3.40 A"/>
    <property type="chains" value="l=2-88"/>
</dbReference>
<dbReference type="PDB" id="6RI5">
    <property type="method" value="EM"/>
    <property type="resolution" value="3.30 A"/>
    <property type="chains" value="i=1-88"/>
</dbReference>
<dbReference type="PDB" id="6RZZ">
    <property type="method" value="EM"/>
    <property type="resolution" value="3.20 A"/>
    <property type="chains" value="i=1-88"/>
</dbReference>
<dbReference type="PDB" id="6S05">
    <property type="method" value="EM"/>
    <property type="resolution" value="3.90 A"/>
    <property type="chains" value="i=1-88"/>
</dbReference>
<dbReference type="PDB" id="6S47">
    <property type="method" value="EM"/>
    <property type="resolution" value="3.28 A"/>
    <property type="chains" value="Al=2-88"/>
</dbReference>
<dbReference type="PDB" id="6SNT">
    <property type="method" value="EM"/>
    <property type="resolution" value="2.80 A"/>
    <property type="chains" value="ag=1-88"/>
</dbReference>
<dbReference type="PDB" id="6SV4">
    <property type="method" value="EM"/>
    <property type="resolution" value="3.30 A"/>
    <property type="chains" value="AF/XF/zF=1-88"/>
</dbReference>
<dbReference type="PDB" id="6T4Q">
    <property type="method" value="EM"/>
    <property type="resolution" value="2.60 A"/>
    <property type="chains" value="Lj=2-86"/>
</dbReference>
<dbReference type="PDB" id="6T7I">
    <property type="method" value="EM"/>
    <property type="resolution" value="3.20 A"/>
    <property type="chains" value="Lj=1-88"/>
</dbReference>
<dbReference type="PDB" id="6T7T">
    <property type="method" value="EM"/>
    <property type="resolution" value="3.10 A"/>
    <property type="chains" value="Lj=1-88"/>
</dbReference>
<dbReference type="PDB" id="6T83">
    <property type="method" value="EM"/>
    <property type="resolution" value="4.00 A"/>
    <property type="chains" value="U/jb=1-88"/>
</dbReference>
<dbReference type="PDB" id="6TB3">
    <property type="method" value="EM"/>
    <property type="resolution" value="2.80 A"/>
    <property type="chains" value="AF=2-82"/>
</dbReference>
<dbReference type="PDB" id="6TNU">
    <property type="method" value="EM"/>
    <property type="resolution" value="3.10 A"/>
    <property type="chains" value="AF=2-82"/>
</dbReference>
<dbReference type="PDB" id="6WOO">
    <property type="method" value="EM"/>
    <property type="resolution" value="2.90 A"/>
    <property type="chains" value="j=2-83"/>
</dbReference>
<dbReference type="PDB" id="6XIQ">
    <property type="method" value="EM"/>
    <property type="resolution" value="4.20 A"/>
    <property type="chains" value="j=1-88"/>
</dbReference>
<dbReference type="PDB" id="6XIR">
    <property type="method" value="EM"/>
    <property type="resolution" value="3.20 A"/>
    <property type="chains" value="j=1-88"/>
</dbReference>
<dbReference type="PDB" id="6YLG">
    <property type="method" value="EM"/>
    <property type="resolution" value="3.00 A"/>
    <property type="chains" value="j=1-88"/>
</dbReference>
<dbReference type="PDB" id="6YLH">
    <property type="method" value="EM"/>
    <property type="resolution" value="3.10 A"/>
    <property type="chains" value="j=1-88"/>
</dbReference>
<dbReference type="PDB" id="6YLX">
    <property type="method" value="EM"/>
    <property type="resolution" value="3.90 A"/>
    <property type="chains" value="j=1-88"/>
</dbReference>
<dbReference type="PDB" id="6YLY">
    <property type="method" value="EM"/>
    <property type="resolution" value="3.80 A"/>
    <property type="chains" value="j=1-88"/>
</dbReference>
<dbReference type="PDB" id="6Z6J">
    <property type="method" value="EM"/>
    <property type="resolution" value="3.40 A"/>
    <property type="chains" value="Lj=1-88"/>
</dbReference>
<dbReference type="PDB" id="6Z6K">
    <property type="method" value="EM"/>
    <property type="resolution" value="3.40 A"/>
    <property type="chains" value="Lj=1-88"/>
</dbReference>
<dbReference type="PDB" id="7AZY">
    <property type="method" value="EM"/>
    <property type="resolution" value="2.88 A"/>
    <property type="chains" value="g=1-88"/>
</dbReference>
<dbReference type="PDB" id="7B7D">
    <property type="method" value="EM"/>
    <property type="resolution" value="3.30 A"/>
    <property type="chains" value="Lf=2-82"/>
</dbReference>
<dbReference type="PDB" id="7BT6">
    <property type="method" value="EM"/>
    <property type="resolution" value="3.12 A"/>
    <property type="chains" value="j=1-88"/>
</dbReference>
<dbReference type="PDB" id="7BTB">
    <property type="method" value="EM"/>
    <property type="resolution" value="3.22 A"/>
    <property type="chains" value="j=1-88"/>
</dbReference>
<dbReference type="PDB" id="7MPI">
    <property type="method" value="EM"/>
    <property type="resolution" value="3.05 A"/>
    <property type="chains" value="Aj=2-88"/>
</dbReference>
<dbReference type="PDB" id="7MPJ">
    <property type="method" value="EM"/>
    <property type="resolution" value="2.70 A"/>
    <property type="chains" value="Aj=2-88"/>
</dbReference>
<dbReference type="PDB" id="7N8B">
    <property type="method" value="EM"/>
    <property type="resolution" value="3.05 A"/>
    <property type="chains" value="Aj=2-88"/>
</dbReference>
<dbReference type="PDB" id="7NAC">
    <property type="method" value="EM"/>
    <property type="resolution" value="3.04 A"/>
    <property type="chains" value="j=1-88"/>
</dbReference>
<dbReference type="PDB" id="7NAD">
    <property type="method" value="EM"/>
    <property type="resolution" value="3.04 A"/>
    <property type="chains" value="j=1-88"/>
</dbReference>
<dbReference type="PDB" id="7NRC">
    <property type="method" value="EM"/>
    <property type="resolution" value="3.90 A"/>
    <property type="chains" value="Ll=2-82"/>
</dbReference>
<dbReference type="PDB" id="7NRD">
    <property type="method" value="EM"/>
    <property type="resolution" value="4.36 A"/>
    <property type="chains" value="Ll=2-82"/>
</dbReference>
<dbReference type="PDB" id="7OF1">
    <property type="method" value="EM"/>
    <property type="resolution" value="3.10 A"/>
    <property type="chains" value="j=1-88"/>
</dbReference>
<dbReference type="PDB" id="7OH3">
    <property type="method" value="EM"/>
    <property type="resolution" value="3.40 A"/>
    <property type="chains" value="j=1-88"/>
</dbReference>
<dbReference type="PDB" id="7OHP">
    <property type="method" value="EM"/>
    <property type="resolution" value="3.90 A"/>
    <property type="chains" value="j=1-88"/>
</dbReference>
<dbReference type="PDB" id="7OHQ">
    <property type="method" value="EM"/>
    <property type="resolution" value="3.10 A"/>
    <property type="chains" value="j=1-88"/>
</dbReference>
<dbReference type="PDB" id="7OHR">
    <property type="method" value="EM"/>
    <property type="resolution" value="4.72 A"/>
    <property type="chains" value="j=1-88"/>
</dbReference>
<dbReference type="PDB" id="7OHS">
    <property type="method" value="EM"/>
    <property type="resolution" value="4.38 A"/>
    <property type="chains" value="j=1-88"/>
</dbReference>
<dbReference type="PDB" id="7OHU">
    <property type="method" value="EM"/>
    <property type="resolution" value="3.70 A"/>
    <property type="chains" value="j=1-88"/>
</dbReference>
<dbReference type="PDB" id="7OHV">
    <property type="method" value="EM"/>
    <property type="resolution" value="3.90 A"/>
    <property type="chains" value="j=1-88"/>
</dbReference>
<dbReference type="PDB" id="7OHW">
    <property type="method" value="EM"/>
    <property type="resolution" value="3.50 A"/>
    <property type="chains" value="j=1-88"/>
</dbReference>
<dbReference type="PDB" id="7OHX">
    <property type="method" value="EM"/>
    <property type="resolution" value="3.30 A"/>
    <property type="chains" value="j=1-88"/>
</dbReference>
<dbReference type="PDB" id="7OHY">
    <property type="method" value="EM"/>
    <property type="resolution" value="3.90 A"/>
    <property type="chains" value="j=1-88"/>
</dbReference>
<dbReference type="PDB" id="7R72">
    <property type="method" value="EM"/>
    <property type="resolution" value="3.07 A"/>
    <property type="chains" value="j=1-88"/>
</dbReference>
<dbReference type="PDB" id="7R7A">
    <property type="method" value="EM"/>
    <property type="resolution" value="3.04 A"/>
    <property type="chains" value="j=1-88"/>
</dbReference>
<dbReference type="PDB" id="7TOO">
    <property type="method" value="EM"/>
    <property type="resolution" value="2.70 A"/>
    <property type="chains" value="AL37=1-88"/>
</dbReference>
<dbReference type="PDB" id="7TOP">
    <property type="method" value="EM"/>
    <property type="resolution" value="2.40 A"/>
    <property type="chains" value="AL37=1-88"/>
</dbReference>
<dbReference type="PDB" id="7U0H">
    <property type="method" value="EM"/>
    <property type="resolution" value="2.76 A"/>
    <property type="chains" value="j=1-88"/>
</dbReference>
<dbReference type="PDB" id="7UG6">
    <property type="method" value="EM"/>
    <property type="resolution" value="2.90 A"/>
    <property type="chains" value="j=1-88"/>
</dbReference>
<dbReference type="PDB" id="7UOO">
    <property type="method" value="EM"/>
    <property type="resolution" value="2.34 A"/>
    <property type="chains" value="j=1-88"/>
</dbReference>
<dbReference type="PDB" id="7UQB">
    <property type="method" value="EM"/>
    <property type="resolution" value="2.43 A"/>
    <property type="chains" value="j=1-88"/>
</dbReference>
<dbReference type="PDB" id="7UQZ">
    <property type="method" value="EM"/>
    <property type="resolution" value="2.44 A"/>
    <property type="chains" value="j=1-87"/>
</dbReference>
<dbReference type="PDB" id="7V08">
    <property type="method" value="EM"/>
    <property type="resolution" value="2.36 A"/>
    <property type="chains" value="j=1-88"/>
</dbReference>
<dbReference type="PDB" id="7Z34">
    <property type="method" value="EM"/>
    <property type="resolution" value="3.80 A"/>
    <property type="chains" value="j=1-88"/>
</dbReference>
<dbReference type="PDB" id="7ZPQ">
    <property type="method" value="EM"/>
    <property type="resolution" value="3.47 A"/>
    <property type="chains" value="Bi=2-86"/>
</dbReference>
<dbReference type="PDB" id="7ZRS">
    <property type="method" value="EM"/>
    <property type="resolution" value="4.80 A"/>
    <property type="chains" value="Bi=2-86"/>
</dbReference>
<dbReference type="PDB" id="7ZS5">
    <property type="method" value="EM"/>
    <property type="resolution" value="3.20 A"/>
    <property type="chains" value="Bk=2-88"/>
</dbReference>
<dbReference type="PDB" id="7ZUW">
    <property type="method" value="EM"/>
    <property type="resolution" value="4.30 A"/>
    <property type="chains" value="Bi=2-86"/>
</dbReference>
<dbReference type="PDB" id="7ZUX">
    <property type="method" value="EM"/>
    <property type="resolution" value="2.50 A"/>
    <property type="chains" value="Ei=2-86"/>
</dbReference>
<dbReference type="PDB" id="7ZW0">
    <property type="method" value="EM"/>
    <property type="resolution" value="2.40 A"/>
    <property type="chains" value="Lm=1-88"/>
</dbReference>
<dbReference type="PDB" id="8AAF">
    <property type="method" value="EM"/>
    <property type="resolution" value="2.50 A"/>
    <property type="chains" value="W=1-88"/>
</dbReference>
<dbReference type="PDB" id="8AGT">
    <property type="method" value="EM"/>
    <property type="resolution" value="2.60 A"/>
    <property type="chains" value="W=1-88"/>
</dbReference>
<dbReference type="PDB" id="8AGU">
    <property type="method" value="EM"/>
    <property type="resolution" value="2.70 A"/>
    <property type="chains" value="W=1-88"/>
</dbReference>
<dbReference type="PDB" id="8AGV">
    <property type="method" value="EM"/>
    <property type="resolution" value="2.60 A"/>
    <property type="chains" value="W=1-88"/>
</dbReference>
<dbReference type="PDB" id="8AGW">
    <property type="method" value="EM"/>
    <property type="resolution" value="2.60 A"/>
    <property type="chains" value="W=1-88"/>
</dbReference>
<dbReference type="PDB" id="8AGX">
    <property type="method" value="EM"/>
    <property type="resolution" value="2.40 A"/>
    <property type="chains" value="W=1-88"/>
</dbReference>
<dbReference type="PDB" id="8AGZ">
    <property type="method" value="EM"/>
    <property type="resolution" value="2.60 A"/>
    <property type="chains" value="W=1-88"/>
</dbReference>
<dbReference type="PDB" id="8BIP">
    <property type="method" value="EM"/>
    <property type="resolution" value="3.10 A"/>
    <property type="chains" value="Lj=2-86"/>
</dbReference>
<dbReference type="PDB" id="8BJQ">
    <property type="method" value="EM"/>
    <property type="resolution" value="3.80 A"/>
    <property type="chains" value="Lj=2-86"/>
</dbReference>
<dbReference type="PDB" id="8BN3">
    <property type="method" value="EM"/>
    <property type="resolution" value="2.40 A"/>
    <property type="chains" value="O7=2-87"/>
</dbReference>
<dbReference type="PDB" id="8BQD">
    <property type="method" value="EM"/>
    <property type="resolution" value="3.90 A"/>
    <property type="chains" value="AF=2-82"/>
</dbReference>
<dbReference type="PDB" id="8BQX">
    <property type="method" value="EM"/>
    <property type="resolution" value="3.80 A"/>
    <property type="chains" value="AF=2-82"/>
</dbReference>
<dbReference type="PDB" id="8CCS">
    <property type="method" value="EM"/>
    <property type="resolution" value="1.97 A"/>
    <property type="chains" value="V=1-88"/>
</dbReference>
<dbReference type="PDB" id="8CDL">
    <property type="method" value="EM"/>
    <property type="resolution" value="2.72 A"/>
    <property type="chains" value="V=1-88"/>
</dbReference>
<dbReference type="PDB" id="8CDR">
    <property type="method" value="EM"/>
    <property type="resolution" value="2.04 A"/>
    <property type="chains" value="V=1-88"/>
</dbReference>
<dbReference type="PDB" id="8CEH">
    <property type="method" value="EM"/>
    <property type="resolution" value="2.05 A"/>
    <property type="chains" value="V=1-88"/>
</dbReference>
<dbReference type="PDB" id="8CF5">
    <property type="method" value="EM"/>
    <property type="resolution" value="2.71 A"/>
    <property type="chains" value="V=1-88"/>
</dbReference>
<dbReference type="PDB" id="8CG8">
    <property type="method" value="EM"/>
    <property type="resolution" value="2.57 A"/>
    <property type="chains" value="V=1-88"/>
</dbReference>
<dbReference type="PDB" id="8CGN">
    <property type="method" value="EM"/>
    <property type="resolution" value="2.28 A"/>
    <property type="chains" value="V=1-88"/>
</dbReference>
<dbReference type="PDB" id="8CIV">
    <property type="method" value="EM"/>
    <property type="resolution" value="2.47 A"/>
    <property type="chains" value="V=1-88"/>
</dbReference>
<dbReference type="PDB" id="8CKU">
    <property type="method" value="EM"/>
    <property type="resolution" value="3.11 A"/>
    <property type="chains" value="V=1-88"/>
</dbReference>
<dbReference type="PDB" id="8CMJ">
    <property type="method" value="EM"/>
    <property type="resolution" value="3.79 A"/>
    <property type="chains" value="V=1-88"/>
</dbReference>
<dbReference type="PDB" id="8EUB">
    <property type="method" value="EM"/>
    <property type="resolution" value="2.52 A"/>
    <property type="chains" value="Aj=1-88"/>
</dbReference>
<dbReference type="PDB" id="8EVP">
    <property type="method" value="EM"/>
    <property type="resolution" value="2.38 A"/>
    <property type="chains" value="Aj=1-88"/>
</dbReference>
<dbReference type="PDB" id="8EVQ">
    <property type="method" value="EM"/>
    <property type="resolution" value="2.72 A"/>
    <property type="chains" value="Aj=1-88"/>
</dbReference>
<dbReference type="PDB" id="8EVR">
    <property type="method" value="EM"/>
    <property type="resolution" value="2.87 A"/>
    <property type="chains" value="Aj=1-88"/>
</dbReference>
<dbReference type="PDB" id="8EVS">
    <property type="method" value="EM"/>
    <property type="resolution" value="2.62 A"/>
    <property type="chains" value="Aj=1-88"/>
</dbReference>
<dbReference type="PDB" id="8EVT">
    <property type="method" value="EM"/>
    <property type="resolution" value="2.20 A"/>
    <property type="chains" value="Aj=1-88"/>
</dbReference>
<dbReference type="PDB" id="8EWB">
    <property type="method" value="EM"/>
    <property type="resolution" value="2.87 A"/>
    <property type="chains" value="Aj=1-88"/>
</dbReference>
<dbReference type="PDB" id="8EWC">
    <property type="method" value="EM"/>
    <property type="resolution" value="2.45 A"/>
    <property type="chains" value="Aj=1-88"/>
</dbReference>
<dbReference type="PDB" id="8HFR">
    <property type="method" value="EM"/>
    <property type="resolution" value="2.64 A"/>
    <property type="chains" value="jh=1-88"/>
</dbReference>
<dbReference type="PDB" id="8K2D">
    <property type="method" value="EM"/>
    <property type="resolution" value="3.20 A"/>
    <property type="chains" value="Lj=1-88"/>
</dbReference>
<dbReference type="PDB" id="8K82">
    <property type="method" value="EM"/>
    <property type="resolution" value="3.00 A"/>
    <property type="chains" value="Lj=1-88"/>
</dbReference>
<dbReference type="PDB" id="8P4V">
    <property type="method" value="X-ray"/>
    <property type="resolution" value="3.16 A"/>
    <property type="chains" value="AK/DL=1-88"/>
</dbReference>
<dbReference type="PDB" id="8P8M">
    <property type="method" value="EM"/>
    <property type="resolution" value="2.66 A"/>
    <property type="chains" value="RJ=1-88"/>
</dbReference>
<dbReference type="PDB" id="8P8N">
    <property type="method" value="EM"/>
    <property type="resolution" value="2.15 A"/>
    <property type="chains" value="RJ=1-88"/>
</dbReference>
<dbReference type="PDB" id="8P8U">
    <property type="method" value="EM"/>
    <property type="resolution" value="2.23 A"/>
    <property type="chains" value="RJ=1-88"/>
</dbReference>
<dbReference type="PDB" id="8P9A">
    <property type="method" value="X-ray"/>
    <property type="resolution" value="2.90 A"/>
    <property type="chains" value="AK/DL=1-88"/>
</dbReference>
<dbReference type="PDB" id="8PFR">
    <property type="method" value="EM"/>
    <property type="resolution" value="2.15 A"/>
    <property type="chains" value="RJ=1-88"/>
</dbReference>
<dbReference type="PDB" id="8T2X">
    <property type="method" value="EM"/>
    <property type="resolution" value="2.46 A"/>
    <property type="chains" value="Aj=1-88"/>
</dbReference>
<dbReference type="PDB" id="8T2Y">
    <property type="method" value="EM"/>
    <property type="resolution" value="2.20 A"/>
    <property type="chains" value="Aj=1-88"/>
</dbReference>
<dbReference type="PDB" id="8T2Z">
    <property type="method" value="EM"/>
    <property type="resolution" value="2.40 A"/>
    <property type="chains" value="Aj=1-88"/>
</dbReference>
<dbReference type="PDB" id="8T30">
    <property type="method" value="EM"/>
    <property type="resolution" value="2.88 A"/>
    <property type="chains" value="Aj=1-88"/>
</dbReference>
<dbReference type="PDB" id="8T3A">
    <property type="method" value="EM"/>
    <property type="resolution" value="2.86 A"/>
    <property type="chains" value="Aj=1-88"/>
</dbReference>
<dbReference type="PDB" id="8T3B">
    <property type="method" value="EM"/>
    <property type="resolution" value="3.08 A"/>
    <property type="chains" value="Aj=1-88"/>
</dbReference>
<dbReference type="PDB" id="8T3C">
    <property type="method" value="EM"/>
    <property type="resolution" value="3.86 A"/>
    <property type="chains" value="Aj=1-88"/>
</dbReference>
<dbReference type="PDB" id="8T3D">
    <property type="method" value="EM"/>
    <property type="resolution" value="2.95 A"/>
    <property type="chains" value="Aj=1-88"/>
</dbReference>
<dbReference type="PDB" id="8T3E">
    <property type="method" value="EM"/>
    <property type="resolution" value="3.04 A"/>
    <property type="chains" value="Aj=1-88"/>
</dbReference>
<dbReference type="PDB" id="8T3F">
    <property type="method" value="EM"/>
    <property type="resolution" value="3.09 A"/>
    <property type="chains" value="Aj=1-88"/>
</dbReference>
<dbReference type="PDB" id="8UT0">
    <property type="method" value="EM"/>
    <property type="resolution" value="3.22 A"/>
    <property type="chains" value="Ll=2-82"/>
</dbReference>
<dbReference type="PDB" id="8UTI">
    <property type="method" value="EM"/>
    <property type="resolution" value="3.13 A"/>
    <property type="chains" value="Ll=2-82"/>
</dbReference>
<dbReference type="PDB" id="8V83">
    <property type="method" value="EM"/>
    <property type="resolution" value="2.53 A"/>
    <property type="chains" value="j=1-88"/>
</dbReference>
<dbReference type="PDB" id="8V84">
    <property type="method" value="EM"/>
    <property type="resolution" value="2.70 A"/>
    <property type="chains" value="j=1-88"/>
</dbReference>
<dbReference type="PDB" id="8V87">
    <property type="method" value="EM"/>
    <property type="resolution" value="2.66 A"/>
    <property type="chains" value="j=1-88"/>
</dbReference>
<dbReference type="PDB" id="8XU8">
    <property type="method" value="EM"/>
    <property type="resolution" value="3.40 A"/>
    <property type="chains" value="l=2-82"/>
</dbReference>
<dbReference type="PDB" id="8Y0U">
    <property type="method" value="EM"/>
    <property type="resolution" value="3.59 A"/>
    <property type="chains" value="Lj=1-88"/>
</dbReference>
<dbReference type="PDB" id="8YLD">
    <property type="method" value="EM"/>
    <property type="resolution" value="3.90 A"/>
    <property type="chains" value="l=2-82"/>
</dbReference>
<dbReference type="PDB" id="8YLR">
    <property type="method" value="EM"/>
    <property type="resolution" value="3.90 A"/>
    <property type="chains" value="l=2-82"/>
</dbReference>
<dbReference type="PDB" id="8Z70">
    <property type="method" value="EM"/>
    <property type="resolution" value="3.20 A"/>
    <property type="chains" value="l=2-82"/>
</dbReference>
<dbReference type="PDB" id="8Z71">
    <property type="method" value="EM"/>
    <property type="resolution" value="3.60 A"/>
    <property type="chains" value="l=2-82"/>
</dbReference>
<dbReference type="PDB" id="9F9S">
    <property type="method" value="EM"/>
    <property type="resolution" value="2.90 A"/>
    <property type="chains" value="Lh/Mh=1-88"/>
</dbReference>
<dbReference type="PDBsum" id="3J6X"/>
<dbReference type="PDBsum" id="3J6Y"/>
<dbReference type="PDBsum" id="3J77"/>
<dbReference type="PDBsum" id="3J78"/>
<dbReference type="PDBsum" id="3JCT"/>
<dbReference type="PDBsum" id="4U3M"/>
<dbReference type="PDBsum" id="4U3N"/>
<dbReference type="PDBsum" id="4U3U"/>
<dbReference type="PDBsum" id="4U4N"/>
<dbReference type="PDBsum" id="4U4O"/>
<dbReference type="PDBsum" id="4U4Q"/>
<dbReference type="PDBsum" id="4U4R"/>
<dbReference type="PDBsum" id="4U4U"/>
<dbReference type="PDBsum" id="4U4Y"/>
<dbReference type="PDBsum" id="4U4Z"/>
<dbReference type="PDBsum" id="4U50"/>
<dbReference type="PDBsum" id="4U51"/>
<dbReference type="PDBsum" id="4U52"/>
<dbReference type="PDBsum" id="4U53"/>
<dbReference type="PDBsum" id="4U55"/>
<dbReference type="PDBsum" id="4U56"/>
<dbReference type="PDBsum" id="4U6F"/>
<dbReference type="PDBsum" id="4V4B"/>
<dbReference type="PDBsum" id="4V5Z"/>
<dbReference type="PDBsum" id="4V6I"/>
<dbReference type="PDBsum" id="4V7F"/>
<dbReference type="PDBsum" id="4V7R"/>
<dbReference type="PDBsum" id="4V88"/>
<dbReference type="PDBsum" id="4V8T"/>
<dbReference type="PDBsum" id="4V8Y"/>
<dbReference type="PDBsum" id="4V8Z"/>
<dbReference type="PDBsum" id="4V91"/>
<dbReference type="PDBsum" id="5APN"/>
<dbReference type="PDBsum" id="5APO"/>
<dbReference type="PDBsum" id="5DAT"/>
<dbReference type="PDBsum" id="5DC3"/>
<dbReference type="PDBsum" id="5DGE"/>
<dbReference type="PDBsum" id="5DGF"/>
<dbReference type="PDBsum" id="5DGV"/>
<dbReference type="PDBsum" id="5FCI"/>
<dbReference type="PDBsum" id="5FCJ"/>
<dbReference type="PDBsum" id="5GAK"/>
<dbReference type="PDBsum" id="5H4P"/>
<dbReference type="PDBsum" id="5I4L"/>
<dbReference type="PDBsum" id="5JCS"/>
<dbReference type="PDBsum" id="5JUO"/>
<dbReference type="PDBsum" id="5JUP"/>
<dbReference type="PDBsum" id="5JUS"/>
<dbReference type="PDBsum" id="5JUT"/>
<dbReference type="PDBsum" id="5JUU"/>
<dbReference type="PDBsum" id="5LYB"/>
<dbReference type="PDBsum" id="5M1J"/>
<dbReference type="PDBsum" id="5MC6"/>
<dbReference type="PDBsum" id="5MEI"/>
<dbReference type="PDBsum" id="5NDG"/>
<dbReference type="PDBsum" id="5NDV"/>
<dbReference type="PDBsum" id="5NDW"/>
<dbReference type="PDBsum" id="5OBM"/>
<dbReference type="PDBsum" id="5ON6"/>
<dbReference type="PDBsum" id="5T62"/>
<dbReference type="PDBsum" id="5T6R"/>
<dbReference type="PDBsum" id="5TBW"/>
<dbReference type="PDBsum" id="5TGA"/>
<dbReference type="PDBsum" id="5TGM"/>
<dbReference type="PDBsum" id="5Z3G"/>
<dbReference type="PDBsum" id="6C0F"/>
<dbReference type="PDBsum" id="6CB1"/>
<dbReference type="PDBsum" id="6ELZ"/>
<dbReference type="PDBsum" id="6EM1"/>
<dbReference type="PDBsum" id="6EM3"/>
<dbReference type="PDBsum" id="6EM4"/>
<dbReference type="PDBsum" id="6EM5"/>
<dbReference type="PDBsum" id="6FT6"/>
<dbReference type="PDBsum" id="6GQ1"/>
<dbReference type="PDBsum" id="6GQB"/>
<dbReference type="PDBsum" id="6GQV"/>
<dbReference type="PDBsum" id="6HD7"/>
<dbReference type="PDBsum" id="6HHQ"/>
<dbReference type="PDBsum" id="6I7O"/>
<dbReference type="PDBsum" id="6M62"/>
<dbReference type="PDBsum" id="6N8J"/>
<dbReference type="PDBsum" id="6N8K"/>
<dbReference type="PDBsum" id="6N8L"/>
<dbReference type="PDBsum" id="6N8M"/>
<dbReference type="PDBsum" id="6N8N"/>
<dbReference type="PDBsum" id="6N8O"/>
<dbReference type="PDBsum" id="6OIG"/>
<dbReference type="PDBsum" id="6Q8Y"/>
<dbReference type="PDBsum" id="6QIK"/>
<dbReference type="PDBsum" id="6QT0"/>
<dbReference type="PDBsum" id="6QTZ"/>
<dbReference type="PDBsum" id="6R84"/>
<dbReference type="PDBsum" id="6R86"/>
<dbReference type="PDBsum" id="6R87"/>
<dbReference type="PDBsum" id="6RI5"/>
<dbReference type="PDBsum" id="6RZZ"/>
<dbReference type="PDBsum" id="6S05"/>
<dbReference type="PDBsum" id="6S47"/>
<dbReference type="PDBsum" id="6SNT"/>
<dbReference type="PDBsum" id="6SV4"/>
<dbReference type="PDBsum" id="6T4Q"/>
<dbReference type="PDBsum" id="6T7I"/>
<dbReference type="PDBsum" id="6T7T"/>
<dbReference type="PDBsum" id="6T83"/>
<dbReference type="PDBsum" id="6TB3"/>
<dbReference type="PDBsum" id="6TNU"/>
<dbReference type="PDBsum" id="6WOO"/>
<dbReference type="PDBsum" id="6XIQ"/>
<dbReference type="PDBsum" id="6XIR"/>
<dbReference type="PDBsum" id="6YLG"/>
<dbReference type="PDBsum" id="6YLH"/>
<dbReference type="PDBsum" id="6YLX"/>
<dbReference type="PDBsum" id="6YLY"/>
<dbReference type="PDBsum" id="6Z6J"/>
<dbReference type="PDBsum" id="6Z6K"/>
<dbReference type="PDBsum" id="7AZY"/>
<dbReference type="PDBsum" id="7B7D"/>
<dbReference type="PDBsum" id="7BT6"/>
<dbReference type="PDBsum" id="7BTB"/>
<dbReference type="PDBsum" id="7MPI"/>
<dbReference type="PDBsum" id="7MPJ"/>
<dbReference type="PDBsum" id="7N8B"/>
<dbReference type="PDBsum" id="7NAC"/>
<dbReference type="PDBsum" id="7NAD"/>
<dbReference type="PDBsum" id="7NRC"/>
<dbReference type="PDBsum" id="7NRD"/>
<dbReference type="PDBsum" id="7OF1"/>
<dbReference type="PDBsum" id="7OH3"/>
<dbReference type="PDBsum" id="7OHP"/>
<dbReference type="PDBsum" id="7OHQ"/>
<dbReference type="PDBsum" id="7OHR"/>
<dbReference type="PDBsum" id="7OHS"/>
<dbReference type="PDBsum" id="7OHU"/>
<dbReference type="PDBsum" id="7OHV"/>
<dbReference type="PDBsum" id="7OHW"/>
<dbReference type="PDBsum" id="7OHX"/>
<dbReference type="PDBsum" id="7OHY"/>
<dbReference type="PDBsum" id="7R72"/>
<dbReference type="PDBsum" id="7R7A"/>
<dbReference type="PDBsum" id="7TOO"/>
<dbReference type="PDBsum" id="7TOP"/>
<dbReference type="PDBsum" id="7U0H"/>
<dbReference type="PDBsum" id="7UG6"/>
<dbReference type="PDBsum" id="7UOO"/>
<dbReference type="PDBsum" id="7UQB"/>
<dbReference type="PDBsum" id="7UQZ"/>
<dbReference type="PDBsum" id="7V08"/>
<dbReference type="PDBsum" id="7Z34"/>
<dbReference type="PDBsum" id="7ZPQ"/>
<dbReference type="PDBsum" id="7ZRS"/>
<dbReference type="PDBsum" id="7ZS5"/>
<dbReference type="PDBsum" id="7ZUW"/>
<dbReference type="PDBsum" id="7ZUX"/>
<dbReference type="PDBsum" id="7ZW0"/>
<dbReference type="PDBsum" id="8AAF"/>
<dbReference type="PDBsum" id="8AGT"/>
<dbReference type="PDBsum" id="8AGU"/>
<dbReference type="PDBsum" id="8AGV"/>
<dbReference type="PDBsum" id="8AGW"/>
<dbReference type="PDBsum" id="8AGX"/>
<dbReference type="PDBsum" id="8AGZ"/>
<dbReference type="PDBsum" id="8BIP"/>
<dbReference type="PDBsum" id="8BJQ"/>
<dbReference type="PDBsum" id="8BN3"/>
<dbReference type="PDBsum" id="8BQD"/>
<dbReference type="PDBsum" id="8BQX"/>
<dbReference type="PDBsum" id="8CCS"/>
<dbReference type="PDBsum" id="8CDL"/>
<dbReference type="PDBsum" id="8CDR"/>
<dbReference type="PDBsum" id="8CEH"/>
<dbReference type="PDBsum" id="8CF5"/>
<dbReference type="PDBsum" id="8CG8"/>
<dbReference type="PDBsum" id="8CGN"/>
<dbReference type="PDBsum" id="8CIV"/>
<dbReference type="PDBsum" id="8CKU"/>
<dbReference type="PDBsum" id="8CMJ"/>
<dbReference type="PDBsum" id="8EUB"/>
<dbReference type="PDBsum" id="8EVP"/>
<dbReference type="PDBsum" id="8EVQ"/>
<dbReference type="PDBsum" id="8EVR"/>
<dbReference type="PDBsum" id="8EVS"/>
<dbReference type="PDBsum" id="8EVT"/>
<dbReference type="PDBsum" id="8EWB"/>
<dbReference type="PDBsum" id="8EWC"/>
<dbReference type="PDBsum" id="8HFR"/>
<dbReference type="PDBsum" id="8K2D"/>
<dbReference type="PDBsum" id="8K82"/>
<dbReference type="PDBsum" id="8P4V"/>
<dbReference type="PDBsum" id="8P8M"/>
<dbReference type="PDBsum" id="8P8N"/>
<dbReference type="PDBsum" id="8P8U"/>
<dbReference type="PDBsum" id="8P9A"/>
<dbReference type="PDBsum" id="8PFR"/>
<dbReference type="PDBsum" id="8T2X"/>
<dbReference type="PDBsum" id="8T2Y"/>
<dbReference type="PDBsum" id="8T2Z"/>
<dbReference type="PDBsum" id="8T30"/>
<dbReference type="PDBsum" id="8T3A"/>
<dbReference type="PDBsum" id="8T3B"/>
<dbReference type="PDBsum" id="8T3C"/>
<dbReference type="PDBsum" id="8T3D"/>
<dbReference type="PDBsum" id="8T3E"/>
<dbReference type="PDBsum" id="8T3F"/>
<dbReference type="PDBsum" id="8UT0"/>
<dbReference type="PDBsum" id="8UTI"/>
<dbReference type="PDBsum" id="8V83"/>
<dbReference type="PDBsum" id="8V84"/>
<dbReference type="PDBsum" id="8V87"/>
<dbReference type="PDBsum" id="8XU8"/>
<dbReference type="PDBsum" id="8Y0U"/>
<dbReference type="PDBsum" id="8YLD"/>
<dbReference type="PDBsum" id="8YLR"/>
<dbReference type="PDBsum" id="8Z70"/>
<dbReference type="PDBsum" id="8Z71"/>
<dbReference type="PDBsum" id="9F9S"/>
<dbReference type="EMDB" id="EMD-0369"/>
<dbReference type="EMDB" id="EMD-0370"/>
<dbReference type="EMDB" id="EMD-0371"/>
<dbReference type="EMDB" id="EMD-0372"/>
<dbReference type="EMDB" id="EMD-0373"/>
<dbReference type="EMDB" id="EMD-10068"/>
<dbReference type="EMDB" id="EMD-10071"/>
<dbReference type="EMDB" id="EMD-10315"/>
<dbReference type="EMDB" id="EMD-10377"/>
<dbReference type="EMDB" id="EMD-10396"/>
<dbReference type="EMDB" id="EMD-10397"/>
<dbReference type="EMDB" id="EMD-10398"/>
<dbReference type="EMDB" id="EMD-10431"/>
<dbReference type="EMDB" id="EMD-10537"/>
<dbReference type="EMDB" id="EMD-10841"/>
<dbReference type="EMDB" id="EMD-10842"/>
<dbReference type="EMDB" id="EMD-11096"/>
<dbReference type="EMDB" id="EMD-11097"/>
<dbReference type="EMDB" id="EMD-11951"/>
<dbReference type="EMDB" id="EMD-12866"/>
<dbReference type="EMDB" id="EMD-12892"/>
<dbReference type="EMDB" id="EMD-12904"/>
<dbReference type="EMDB" id="EMD-12905"/>
<dbReference type="EMDB" id="EMD-12906"/>
<dbReference type="EMDB" id="EMD-12907"/>
<dbReference type="EMDB" id="EMD-12909"/>
<dbReference type="EMDB" id="EMD-12910"/>
<dbReference type="EMDB" id="EMD-12911"/>
<dbReference type="EMDB" id="EMD-12912"/>
<dbReference type="EMDB" id="EMD-12913"/>
<dbReference type="EMDB" id="EMD-14471"/>
<dbReference type="EMDB" id="EMD-14861"/>
<dbReference type="EMDB" id="EMD-14921"/>
<dbReference type="EMDB" id="EMD-14926"/>
<dbReference type="EMDB" id="EMD-14978"/>
<dbReference type="EMDB" id="EMD-14979"/>
<dbReference type="EMDB" id="EMD-14990"/>
<dbReference type="EMDB" id="EMD-15296"/>
<dbReference type="EMDB" id="EMD-15423"/>
<dbReference type="EMDB" id="EMD-15424"/>
<dbReference type="EMDB" id="EMD-15425"/>
<dbReference type="EMDB" id="EMD-15426"/>
<dbReference type="EMDB" id="EMD-15427"/>
<dbReference type="EMDB" id="EMD-15428"/>
<dbReference type="EMDB" id="EMD-16086"/>
<dbReference type="EMDB" id="EMD-16090"/>
<dbReference type="EMDB" id="EMD-16127"/>
<dbReference type="EMDB" id="EMD-16182"/>
<dbReference type="EMDB" id="EMD-16563"/>
<dbReference type="EMDB" id="EMD-16591"/>
<dbReference type="EMDB" id="EMD-16594"/>
<dbReference type="EMDB" id="EMD-16609"/>
<dbReference type="EMDB" id="EMD-16616"/>
<dbReference type="EMDB" id="EMD-16634"/>
<dbReference type="EMDB" id="EMD-16648"/>
<dbReference type="EMDB" id="EMD-16684"/>
<dbReference type="EMDB" id="EMD-16702"/>
<dbReference type="EMDB" id="EMD-16729"/>
<dbReference type="EMDB" id="EMD-17549"/>
<dbReference type="EMDB" id="EMD-17550"/>
<dbReference type="EMDB" id="EMD-17552"/>
<dbReference type="EMDB" id="EMD-17653"/>
<dbReference type="EMDB" id="EMD-20077"/>
<dbReference type="EMDB" id="EMD-21859"/>
<dbReference type="EMDB" id="EMD-22196"/>
<dbReference type="EMDB" id="EMD-22198"/>
<dbReference type="EMDB" id="EMD-23934"/>
<dbReference type="EMDB" id="EMD-23935"/>
<dbReference type="EMDB" id="EMD-24235"/>
<dbReference type="EMDB" id="EMD-24269"/>
<dbReference type="EMDB" id="EMD-24270"/>
<dbReference type="EMDB" id="EMD-24290"/>
<dbReference type="EMDB" id="EMD-24296"/>
<dbReference type="EMDB" id="EMD-26033"/>
<dbReference type="EMDB" id="EMD-26034"/>
<dbReference type="EMDB" id="EMD-26259"/>
<dbReference type="EMDB" id="EMD-26485"/>
<dbReference type="EMDB" id="EMD-26651"/>
<dbReference type="EMDB" id="EMD-26686"/>
<dbReference type="EMDB" id="EMD-26703"/>
<dbReference type="EMDB" id="EMD-26941"/>
<dbReference type="EMDB" id="EMD-28610"/>
<dbReference type="EMDB" id="EMD-28632"/>
<dbReference type="EMDB" id="EMD-28633"/>
<dbReference type="EMDB" id="EMD-28634"/>
<dbReference type="EMDB" id="EMD-28635"/>
<dbReference type="EMDB" id="EMD-28636"/>
<dbReference type="EMDB" id="EMD-28642"/>
<dbReference type="EMDB" id="EMD-28643"/>
<dbReference type="EMDB" id="EMD-30108"/>
<dbReference type="EMDB" id="EMD-30170"/>
<dbReference type="EMDB" id="EMD-30174"/>
<dbReference type="EMDB" id="EMD-34725"/>
<dbReference type="EMDB" id="EMD-36839"/>
<dbReference type="EMDB" id="EMD-36945"/>
<dbReference type="EMDB" id="EMD-38660"/>
<dbReference type="EMDB" id="EMD-40990"/>
<dbReference type="EMDB" id="EMD-40991"/>
<dbReference type="EMDB" id="EMD-40992"/>
<dbReference type="EMDB" id="EMD-40993"/>
<dbReference type="EMDB" id="EMD-40997"/>
<dbReference type="EMDB" id="EMD-40998"/>
<dbReference type="EMDB" id="EMD-40999"/>
<dbReference type="EMDB" id="EMD-41000"/>
<dbReference type="EMDB" id="EMD-41001"/>
<dbReference type="EMDB" id="EMD-41002"/>
<dbReference type="EMDB" id="EMD-4140"/>
<dbReference type="EMDB" id="EMD-42525"/>
<dbReference type="EMDB" id="EMD-42540"/>
<dbReference type="EMDB" id="EMD-43017"/>
<dbReference type="EMDB" id="EMD-4302"/>
<dbReference type="EMDB" id="EMD-43021"/>
<dbReference type="EMDB" id="EMD-43027"/>
<dbReference type="EMDB" id="EMD-4427"/>
<dbReference type="EMDB" id="EMD-4474"/>
<dbReference type="EMDB" id="EMD-4560"/>
<dbReference type="EMDB" id="EMD-4630"/>
<dbReference type="EMDB" id="EMD-4636"/>
<dbReference type="EMDB" id="EMD-4751"/>
<dbReference type="EMDB" id="EMD-4752"/>
<dbReference type="EMDB" id="EMD-4753"/>
<dbReference type="EMDB" id="EMD-4884"/>
<dbReference type="EMDB" id="EMD-50259"/>
<dbReference type="EMDB" id="EMD-6878"/>
<dbReference type="EMDB" id="EMD-7324"/>
<dbReference type="EMDB" id="EMD-7445"/>
<dbReference type="EMDB" id="EMD-8362"/>
<dbReference type="EMDB" id="EMD-8368"/>
<dbReference type="SMR" id="P49166"/>
<dbReference type="BioGRID" id="31455">
    <property type="interactions" value="360"/>
</dbReference>
<dbReference type="ComplexPortal" id="CPX-1601">
    <property type="entry name" value="60S cytosolic large ribosomal subunit"/>
</dbReference>
<dbReference type="DIP" id="DIP-2135N"/>
<dbReference type="FunCoup" id="P49166">
    <property type="interactions" value="688"/>
</dbReference>
<dbReference type="IntAct" id="P49166">
    <property type="interactions" value="91"/>
</dbReference>
<dbReference type="MINT" id="P49166"/>
<dbReference type="STRING" id="4932.YLR185W"/>
<dbReference type="CarbonylDB" id="P49166"/>
<dbReference type="iPTMnet" id="P49166"/>
<dbReference type="PaxDb" id="4932-YLR185W"/>
<dbReference type="PeptideAtlas" id="P49166"/>
<dbReference type="EnsemblFungi" id="YLR185W_mRNA">
    <property type="protein sequence ID" value="YLR185W"/>
    <property type="gene ID" value="YLR185W"/>
</dbReference>
<dbReference type="GeneID" id="850882"/>
<dbReference type="KEGG" id="sce:YLR185W"/>
<dbReference type="AGR" id="SGD:S000004175"/>
<dbReference type="SGD" id="S000004175">
    <property type="gene designation" value="RPL37A"/>
</dbReference>
<dbReference type="VEuPathDB" id="FungiDB:YLR185W"/>
<dbReference type="eggNOG" id="KOG3475">
    <property type="taxonomic scope" value="Eukaryota"/>
</dbReference>
<dbReference type="GeneTree" id="ENSGT00940000168926"/>
<dbReference type="HOGENOM" id="CLU_150908_2_1_1"/>
<dbReference type="InParanoid" id="P49166"/>
<dbReference type="OMA" id="RMAYLKH"/>
<dbReference type="OrthoDB" id="10259236at2759"/>
<dbReference type="BioCyc" id="YEAST:G3O-32308-MONOMER"/>
<dbReference type="Reactome" id="R-SCE-156827">
    <property type="pathway name" value="L13a-mediated translational silencing of Ceruloplasmin expression"/>
</dbReference>
<dbReference type="Reactome" id="R-SCE-1799339">
    <property type="pathway name" value="SRP-dependent cotranslational protein targeting to membrane"/>
</dbReference>
<dbReference type="Reactome" id="R-SCE-72689">
    <property type="pathway name" value="Formation of a pool of free 40S subunits"/>
</dbReference>
<dbReference type="Reactome" id="R-SCE-72706">
    <property type="pathway name" value="GTP hydrolysis and joining of the 60S ribosomal subunit"/>
</dbReference>
<dbReference type="Reactome" id="R-SCE-975956">
    <property type="pathway name" value="Nonsense Mediated Decay (NMD) independent of the Exon Junction Complex (EJC)"/>
</dbReference>
<dbReference type="Reactome" id="R-SCE-975957">
    <property type="pathway name" value="Nonsense Mediated Decay (NMD) enhanced by the Exon Junction Complex (EJC)"/>
</dbReference>
<dbReference type="BioGRID-ORCS" id="850882">
    <property type="hits" value="0 hits in 10 CRISPR screens"/>
</dbReference>
<dbReference type="PRO" id="PR:P49166"/>
<dbReference type="Proteomes" id="UP000002311">
    <property type="component" value="Chromosome XII"/>
</dbReference>
<dbReference type="RNAct" id="P49166">
    <property type="molecule type" value="protein"/>
</dbReference>
<dbReference type="GO" id="GO:0005829">
    <property type="term" value="C:cytosol"/>
    <property type="evidence" value="ECO:0000304"/>
    <property type="project" value="Reactome"/>
</dbReference>
<dbReference type="GO" id="GO:0022625">
    <property type="term" value="C:cytosolic large ribosomal subunit"/>
    <property type="evidence" value="ECO:0000314"/>
    <property type="project" value="SGD"/>
</dbReference>
<dbReference type="GO" id="GO:0030687">
    <property type="term" value="C:preribosome, large subunit precursor"/>
    <property type="evidence" value="ECO:0000314"/>
    <property type="project" value="SGD"/>
</dbReference>
<dbReference type="GO" id="GO:0003723">
    <property type="term" value="F:RNA binding"/>
    <property type="evidence" value="ECO:0000318"/>
    <property type="project" value="GO_Central"/>
</dbReference>
<dbReference type="GO" id="GO:0019843">
    <property type="term" value="F:rRNA binding"/>
    <property type="evidence" value="ECO:0007669"/>
    <property type="project" value="UniProtKB-KW"/>
</dbReference>
<dbReference type="GO" id="GO:0003735">
    <property type="term" value="F:structural constituent of ribosome"/>
    <property type="evidence" value="ECO:0000305"/>
    <property type="project" value="SGD"/>
</dbReference>
<dbReference type="GO" id="GO:0008270">
    <property type="term" value="F:zinc ion binding"/>
    <property type="evidence" value="ECO:0007669"/>
    <property type="project" value="UniProtKB-KW"/>
</dbReference>
<dbReference type="GO" id="GO:0000448">
    <property type="term" value="P:cleavage in ITS2 between 5.8S rRNA and LSU-rRNA of tricistronic rRNA transcript (SSU-rRNA, 5.8S rRNA, LSU-rRNA)"/>
    <property type="evidence" value="ECO:0000316"/>
    <property type="project" value="SGD"/>
</dbReference>
<dbReference type="GO" id="GO:0002181">
    <property type="term" value="P:cytoplasmic translation"/>
    <property type="evidence" value="ECO:0000305"/>
    <property type="project" value="SGD"/>
</dbReference>
<dbReference type="FunFam" id="2.20.25.30:FF:000001">
    <property type="entry name" value="Ribosomal protein L37"/>
    <property type="match status" value="1"/>
</dbReference>
<dbReference type="Gene3D" id="2.20.25.30">
    <property type="match status" value="1"/>
</dbReference>
<dbReference type="HAMAP" id="MF_00547">
    <property type="entry name" value="Ribosomal_eL37"/>
    <property type="match status" value="1"/>
</dbReference>
<dbReference type="InterPro" id="IPR001569">
    <property type="entry name" value="Ribosomal_eL37"/>
</dbReference>
<dbReference type="InterPro" id="IPR011331">
    <property type="entry name" value="Ribosomal_eL37/eL43"/>
</dbReference>
<dbReference type="InterPro" id="IPR018267">
    <property type="entry name" value="Ribosomal_eL37_CS"/>
</dbReference>
<dbReference type="InterPro" id="IPR011332">
    <property type="entry name" value="Ribosomal_zn-bd"/>
</dbReference>
<dbReference type="NCBIfam" id="NF003214">
    <property type="entry name" value="PRK04179.1"/>
    <property type="match status" value="1"/>
</dbReference>
<dbReference type="PANTHER" id="PTHR10768">
    <property type="entry name" value="60S RIBOSOMAL PROTEIN L37"/>
    <property type="match status" value="1"/>
</dbReference>
<dbReference type="PANTHER" id="PTHR10768:SF0">
    <property type="entry name" value="RIBOSOMAL PROTEIN L37"/>
    <property type="match status" value="1"/>
</dbReference>
<dbReference type="Pfam" id="PF01907">
    <property type="entry name" value="Ribosomal_L37e"/>
    <property type="match status" value="1"/>
</dbReference>
<dbReference type="SUPFAM" id="SSF57829">
    <property type="entry name" value="Zn-binding ribosomal proteins"/>
    <property type="match status" value="1"/>
</dbReference>
<dbReference type="PROSITE" id="PS01077">
    <property type="entry name" value="RIBOSOMAL_L37E"/>
    <property type="match status" value="1"/>
</dbReference>
<accession>P49166</accession>
<accession>D6VYI8</accession>
<proteinExistence type="evidence at protein level"/>